<feature type="chain" id="PRO_0000230879" description="Transcriptional repressor NrdR">
    <location>
        <begin position="1"/>
        <end position="159"/>
    </location>
</feature>
<feature type="domain" description="ATP-cone" evidence="1">
    <location>
        <begin position="49"/>
        <end position="139"/>
    </location>
</feature>
<feature type="zinc finger region" evidence="1">
    <location>
        <begin position="3"/>
        <end position="34"/>
    </location>
</feature>
<feature type="region of interest" description="Disordered" evidence="2">
    <location>
        <begin position="1"/>
        <end position="20"/>
    </location>
</feature>
<feature type="compositionally biased region" description="Polar residues" evidence="2">
    <location>
        <begin position="1"/>
        <end position="11"/>
    </location>
</feature>
<proteinExistence type="inferred from homology"/>
<protein>
    <recommendedName>
        <fullName evidence="1">Transcriptional repressor NrdR</fullName>
    </recommendedName>
</protein>
<accession>Q46H54</accession>
<evidence type="ECO:0000255" key="1">
    <source>
        <dbReference type="HAMAP-Rule" id="MF_00440"/>
    </source>
</evidence>
<evidence type="ECO:0000256" key="2">
    <source>
        <dbReference type="SAM" id="MobiDB-lite"/>
    </source>
</evidence>
<gene>
    <name evidence="1" type="primary">nrdR</name>
    <name type="ordered locus">PMN2A_1690</name>
</gene>
<keyword id="KW-0067">ATP-binding</keyword>
<keyword id="KW-0238">DNA-binding</keyword>
<keyword id="KW-0479">Metal-binding</keyword>
<keyword id="KW-0547">Nucleotide-binding</keyword>
<keyword id="KW-1185">Reference proteome</keyword>
<keyword id="KW-0678">Repressor</keyword>
<keyword id="KW-0804">Transcription</keyword>
<keyword id="KW-0805">Transcription regulation</keyword>
<keyword id="KW-0862">Zinc</keyword>
<keyword id="KW-0863">Zinc-finger</keyword>
<comment type="function">
    <text evidence="1">Negatively regulates transcription of bacterial ribonucleotide reductase nrd genes and operons by binding to NrdR-boxes.</text>
</comment>
<comment type="cofactor">
    <cofactor evidence="1">
        <name>Zn(2+)</name>
        <dbReference type="ChEBI" id="CHEBI:29105"/>
    </cofactor>
    <text evidence="1">Binds 1 zinc ion.</text>
</comment>
<comment type="similarity">
    <text evidence="1">Belongs to the NrdR family.</text>
</comment>
<organism>
    <name type="scientific">Prochlorococcus marinus (strain NATL2A)</name>
    <dbReference type="NCBI Taxonomy" id="59920"/>
    <lineage>
        <taxon>Bacteria</taxon>
        <taxon>Bacillati</taxon>
        <taxon>Cyanobacteriota</taxon>
        <taxon>Cyanophyceae</taxon>
        <taxon>Synechococcales</taxon>
        <taxon>Prochlorococcaceae</taxon>
        <taxon>Prochlorococcus</taxon>
    </lineage>
</organism>
<name>NRDR_PROMT</name>
<reference key="1">
    <citation type="journal article" date="2007" name="PLoS Genet.">
        <title>Patterns and implications of gene gain and loss in the evolution of Prochlorococcus.</title>
        <authorList>
            <person name="Kettler G.C."/>
            <person name="Martiny A.C."/>
            <person name="Huang K."/>
            <person name="Zucker J."/>
            <person name="Coleman M.L."/>
            <person name="Rodrigue S."/>
            <person name="Chen F."/>
            <person name="Lapidus A."/>
            <person name="Ferriera S."/>
            <person name="Johnson J."/>
            <person name="Steglich C."/>
            <person name="Church G.M."/>
            <person name="Richardson P."/>
            <person name="Chisholm S.W."/>
        </authorList>
    </citation>
    <scope>NUCLEOTIDE SEQUENCE [LARGE SCALE GENOMIC DNA]</scope>
    <source>
        <strain>NATL2A</strain>
    </source>
</reference>
<sequence>MQCPSCQNTDSRVLESRSADSGRSVRRRRECLNCDFRFTTYERVETTPINVLKRSGAKELFNRSKIINGLNRACEKTLIHGSKIEFIVDEIELELHQGVCKEIKSIEIGEMVLTHLKDINEVAYIRFASVYRQFNGINDFMKTLEALKPIKKEQLASVI</sequence>
<dbReference type="EMBL" id="CP000095">
    <property type="protein sequence ID" value="AAZ59178.1"/>
    <property type="molecule type" value="Genomic_DNA"/>
</dbReference>
<dbReference type="RefSeq" id="WP_011294324.1">
    <property type="nucleotide sequence ID" value="NC_007335.2"/>
</dbReference>
<dbReference type="SMR" id="Q46H54"/>
<dbReference type="STRING" id="59920.PMN2A_1690"/>
<dbReference type="KEGG" id="pmn:PMN2A_1690"/>
<dbReference type="HOGENOM" id="CLU_108412_0_0_3"/>
<dbReference type="OrthoDB" id="9807461at2"/>
<dbReference type="PhylomeDB" id="Q46H54"/>
<dbReference type="Proteomes" id="UP000002535">
    <property type="component" value="Chromosome"/>
</dbReference>
<dbReference type="GO" id="GO:0005524">
    <property type="term" value="F:ATP binding"/>
    <property type="evidence" value="ECO:0007669"/>
    <property type="project" value="UniProtKB-KW"/>
</dbReference>
<dbReference type="GO" id="GO:0003677">
    <property type="term" value="F:DNA binding"/>
    <property type="evidence" value="ECO:0007669"/>
    <property type="project" value="UniProtKB-KW"/>
</dbReference>
<dbReference type="GO" id="GO:0008270">
    <property type="term" value="F:zinc ion binding"/>
    <property type="evidence" value="ECO:0007669"/>
    <property type="project" value="UniProtKB-UniRule"/>
</dbReference>
<dbReference type="GO" id="GO:0045892">
    <property type="term" value="P:negative regulation of DNA-templated transcription"/>
    <property type="evidence" value="ECO:0007669"/>
    <property type="project" value="UniProtKB-UniRule"/>
</dbReference>
<dbReference type="HAMAP" id="MF_00440">
    <property type="entry name" value="NrdR"/>
    <property type="match status" value="1"/>
</dbReference>
<dbReference type="InterPro" id="IPR005144">
    <property type="entry name" value="ATP-cone_dom"/>
</dbReference>
<dbReference type="InterPro" id="IPR055173">
    <property type="entry name" value="NrdR-like_N"/>
</dbReference>
<dbReference type="InterPro" id="IPR003796">
    <property type="entry name" value="RNR_NrdR-like"/>
</dbReference>
<dbReference type="NCBIfam" id="TIGR00244">
    <property type="entry name" value="transcriptional regulator NrdR"/>
    <property type="match status" value="1"/>
</dbReference>
<dbReference type="PANTHER" id="PTHR30455">
    <property type="entry name" value="TRANSCRIPTIONAL REPRESSOR NRDR"/>
    <property type="match status" value="1"/>
</dbReference>
<dbReference type="PANTHER" id="PTHR30455:SF2">
    <property type="entry name" value="TRANSCRIPTIONAL REPRESSOR NRDR"/>
    <property type="match status" value="1"/>
</dbReference>
<dbReference type="Pfam" id="PF03477">
    <property type="entry name" value="ATP-cone"/>
    <property type="match status" value="1"/>
</dbReference>
<dbReference type="Pfam" id="PF22811">
    <property type="entry name" value="Zn_ribbon_NrdR"/>
    <property type="match status" value="1"/>
</dbReference>
<dbReference type="PROSITE" id="PS51161">
    <property type="entry name" value="ATP_CONE"/>
    <property type="match status" value="1"/>
</dbReference>